<organism>
    <name type="scientific">Methylocella silvestris (strain DSM 15510 / CIP 108128 / LMG 27833 / NCIMB 13906 / BL2)</name>
    <dbReference type="NCBI Taxonomy" id="395965"/>
    <lineage>
        <taxon>Bacteria</taxon>
        <taxon>Pseudomonadati</taxon>
        <taxon>Pseudomonadota</taxon>
        <taxon>Alphaproteobacteria</taxon>
        <taxon>Hyphomicrobiales</taxon>
        <taxon>Beijerinckiaceae</taxon>
        <taxon>Methylocella</taxon>
    </lineage>
</organism>
<gene>
    <name evidence="1" type="primary">rlmN</name>
    <name type="ordered locus">Msil_2966</name>
</gene>
<comment type="function">
    <text evidence="1">Specifically methylates position 2 of adenine 2503 in 23S rRNA and position 2 of adenine 37 in tRNAs. m2A2503 modification seems to play a crucial role in the proofreading step occurring at the peptidyl transferase center and thus would serve to optimize ribosomal fidelity.</text>
</comment>
<comment type="catalytic activity">
    <reaction evidence="1">
        <text>adenosine(2503) in 23S rRNA + 2 reduced [2Fe-2S]-[ferredoxin] + 2 S-adenosyl-L-methionine = 2-methyladenosine(2503) in 23S rRNA + 5'-deoxyadenosine + L-methionine + 2 oxidized [2Fe-2S]-[ferredoxin] + S-adenosyl-L-homocysteine</text>
        <dbReference type="Rhea" id="RHEA:42916"/>
        <dbReference type="Rhea" id="RHEA-COMP:10000"/>
        <dbReference type="Rhea" id="RHEA-COMP:10001"/>
        <dbReference type="Rhea" id="RHEA-COMP:10152"/>
        <dbReference type="Rhea" id="RHEA-COMP:10282"/>
        <dbReference type="ChEBI" id="CHEBI:17319"/>
        <dbReference type="ChEBI" id="CHEBI:33737"/>
        <dbReference type="ChEBI" id="CHEBI:33738"/>
        <dbReference type="ChEBI" id="CHEBI:57844"/>
        <dbReference type="ChEBI" id="CHEBI:57856"/>
        <dbReference type="ChEBI" id="CHEBI:59789"/>
        <dbReference type="ChEBI" id="CHEBI:74411"/>
        <dbReference type="ChEBI" id="CHEBI:74497"/>
        <dbReference type="EC" id="2.1.1.192"/>
    </reaction>
</comment>
<comment type="catalytic activity">
    <reaction evidence="1">
        <text>adenosine(37) in tRNA + 2 reduced [2Fe-2S]-[ferredoxin] + 2 S-adenosyl-L-methionine = 2-methyladenosine(37) in tRNA + 5'-deoxyadenosine + L-methionine + 2 oxidized [2Fe-2S]-[ferredoxin] + S-adenosyl-L-homocysteine</text>
        <dbReference type="Rhea" id="RHEA:43332"/>
        <dbReference type="Rhea" id="RHEA-COMP:10000"/>
        <dbReference type="Rhea" id="RHEA-COMP:10001"/>
        <dbReference type="Rhea" id="RHEA-COMP:10162"/>
        <dbReference type="Rhea" id="RHEA-COMP:10485"/>
        <dbReference type="ChEBI" id="CHEBI:17319"/>
        <dbReference type="ChEBI" id="CHEBI:33737"/>
        <dbReference type="ChEBI" id="CHEBI:33738"/>
        <dbReference type="ChEBI" id="CHEBI:57844"/>
        <dbReference type="ChEBI" id="CHEBI:57856"/>
        <dbReference type="ChEBI" id="CHEBI:59789"/>
        <dbReference type="ChEBI" id="CHEBI:74411"/>
        <dbReference type="ChEBI" id="CHEBI:74497"/>
        <dbReference type="EC" id="2.1.1.192"/>
    </reaction>
</comment>
<comment type="cofactor">
    <cofactor evidence="1">
        <name>[4Fe-4S] cluster</name>
        <dbReference type="ChEBI" id="CHEBI:49883"/>
    </cofactor>
    <text evidence="1">Binds 1 [4Fe-4S] cluster. The cluster is coordinated with 3 cysteines and an exchangeable S-adenosyl-L-methionine.</text>
</comment>
<comment type="subcellular location">
    <subcellularLocation>
        <location evidence="1">Cytoplasm</location>
    </subcellularLocation>
</comment>
<comment type="miscellaneous">
    <text evidence="1">Reaction proceeds by a ping-pong mechanism involving intermediate methylation of a conserved cysteine residue.</text>
</comment>
<comment type="similarity">
    <text evidence="1">Belongs to the radical SAM superfamily. RlmN family.</text>
</comment>
<dbReference type="EC" id="2.1.1.192" evidence="1"/>
<dbReference type="EMBL" id="CP001280">
    <property type="protein sequence ID" value="ACK51877.1"/>
    <property type="molecule type" value="Genomic_DNA"/>
</dbReference>
<dbReference type="RefSeq" id="WP_012591946.1">
    <property type="nucleotide sequence ID" value="NC_011666.1"/>
</dbReference>
<dbReference type="SMR" id="B8EIR0"/>
<dbReference type="STRING" id="395965.Msil_2966"/>
<dbReference type="KEGG" id="msl:Msil_2966"/>
<dbReference type="eggNOG" id="COG0820">
    <property type="taxonomic scope" value="Bacteria"/>
</dbReference>
<dbReference type="HOGENOM" id="CLU_029101_0_0_5"/>
<dbReference type="OrthoDB" id="9793973at2"/>
<dbReference type="Proteomes" id="UP000002257">
    <property type="component" value="Chromosome"/>
</dbReference>
<dbReference type="GO" id="GO:0005737">
    <property type="term" value="C:cytoplasm"/>
    <property type="evidence" value="ECO:0007669"/>
    <property type="project" value="UniProtKB-SubCell"/>
</dbReference>
<dbReference type="GO" id="GO:0051539">
    <property type="term" value="F:4 iron, 4 sulfur cluster binding"/>
    <property type="evidence" value="ECO:0007669"/>
    <property type="project" value="UniProtKB-UniRule"/>
</dbReference>
<dbReference type="GO" id="GO:0046872">
    <property type="term" value="F:metal ion binding"/>
    <property type="evidence" value="ECO:0007669"/>
    <property type="project" value="UniProtKB-KW"/>
</dbReference>
<dbReference type="GO" id="GO:0070040">
    <property type="term" value="F:rRNA (adenine(2503)-C2-)-methyltransferase activity"/>
    <property type="evidence" value="ECO:0007669"/>
    <property type="project" value="UniProtKB-UniRule"/>
</dbReference>
<dbReference type="GO" id="GO:0019843">
    <property type="term" value="F:rRNA binding"/>
    <property type="evidence" value="ECO:0007669"/>
    <property type="project" value="UniProtKB-UniRule"/>
</dbReference>
<dbReference type="GO" id="GO:0002935">
    <property type="term" value="F:tRNA (adenine(37)-C2)-methyltransferase activity"/>
    <property type="evidence" value="ECO:0007669"/>
    <property type="project" value="UniProtKB-UniRule"/>
</dbReference>
<dbReference type="GO" id="GO:0000049">
    <property type="term" value="F:tRNA binding"/>
    <property type="evidence" value="ECO:0007669"/>
    <property type="project" value="UniProtKB-UniRule"/>
</dbReference>
<dbReference type="GO" id="GO:0070475">
    <property type="term" value="P:rRNA base methylation"/>
    <property type="evidence" value="ECO:0007669"/>
    <property type="project" value="UniProtKB-UniRule"/>
</dbReference>
<dbReference type="GO" id="GO:0030488">
    <property type="term" value="P:tRNA methylation"/>
    <property type="evidence" value="ECO:0007669"/>
    <property type="project" value="UniProtKB-UniRule"/>
</dbReference>
<dbReference type="CDD" id="cd01335">
    <property type="entry name" value="Radical_SAM"/>
    <property type="match status" value="1"/>
</dbReference>
<dbReference type="FunFam" id="3.20.20.70:FF:000008">
    <property type="entry name" value="Dual-specificity RNA methyltransferase RlmN"/>
    <property type="match status" value="1"/>
</dbReference>
<dbReference type="Gene3D" id="1.10.150.530">
    <property type="match status" value="1"/>
</dbReference>
<dbReference type="Gene3D" id="3.20.20.70">
    <property type="entry name" value="Aldolase class I"/>
    <property type="match status" value="1"/>
</dbReference>
<dbReference type="HAMAP" id="MF_01849">
    <property type="entry name" value="RNA_methyltr_RlmN"/>
    <property type="match status" value="1"/>
</dbReference>
<dbReference type="InterPro" id="IPR013785">
    <property type="entry name" value="Aldolase_TIM"/>
</dbReference>
<dbReference type="InterPro" id="IPR040072">
    <property type="entry name" value="Methyltransferase_A"/>
</dbReference>
<dbReference type="InterPro" id="IPR048641">
    <property type="entry name" value="RlmN_N"/>
</dbReference>
<dbReference type="InterPro" id="IPR027492">
    <property type="entry name" value="RNA_MTrfase_RlmN"/>
</dbReference>
<dbReference type="InterPro" id="IPR004383">
    <property type="entry name" value="rRNA_lsu_MTrfase_RlmN/Cfr"/>
</dbReference>
<dbReference type="InterPro" id="IPR007197">
    <property type="entry name" value="rSAM"/>
</dbReference>
<dbReference type="NCBIfam" id="TIGR00048">
    <property type="entry name" value="rRNA_mod_RlmN"/>
    <property type="match status" value="1"/>
</dbReference>
<dbReference type="PANTHER" id="PTHR30544">
    <property type="entry name" value="23S RRNA METHYLTRANSFERASE"/>
    <property type="match status" value="1"/>
</dbReference>
<dbReference type="PANTHER" id="PTHR30544:SF5">
    <property type="entry name" value="RADICAL SAM CORE DOMAIN-CONTAINING PROTEIN"/>
    <property type="match status" value="1"/>
</dbReference>
<dbReference type="Pfam" id="PF04055">
    <property type="entry name" value="Radical_SAM"/>
    <property type="match status" value="1"/>
</dbReference>
<dbReference type="Pfam" id="PF21016">
    <property type="entry name" value="RlmN_N"/>
    <property type="match status" value="1"/>
</dbReference>
<dbReference type="PIRSF" id="PIRSF006004">
    <property type="entry name" value="CHP00048"/>
    <property type="match status" value="1"/>
</dbReference>
<dbReference type="SFLD" id="SFLDF00275">
    <property type="entry name" value="adenosine_C2_methyltransferase"/>
    <property type="match status" value="1"/>
</dbReference>
<dbReference type="SFLD" id="SFLDS00029">
    <property type="entry name" value="Radical_SAM"/>
    <property type="match status" value="1"/>
</dbReference>
<dbReference type="SUPFAM" id="SSF102114">
    <property type="entry name" value="Radical SAM enzymes"/>
    <property type="match status" value="1"/>
</dbReference>
<dbReference type="PROSITE" id="PS51918">
    <property type="entry name" value="RADICAL_SAM"/>
    <property type="match status" value="1"/>
</dbReference>
<accession>B8EIR0</accession>
<protein>
    <recommendedName>
        <fullName evidence="1">Dual-specificity RNA methyltransferase RlmN</fullName>
        <ecNumber evidence="1">2.1.1.192</ecNumber>
    </recommendedName>
    <alternativeName>
        <fullName evidence="1">23S rRNA (adenine(2503)-C(2))-methyltransferase</fullName>
    </alternativeName>
    <alternativeName>
        <fullName evidence="1">23S rRNA m2A2503 methyltransferase</fullName>
    </alternativeName>
    <alternativeName>
        <fullName evidence="1">Ribosomal RNA large subunit methyltransferase N</fullName>
    </alternativeName>
    <alternativeName>
        <fullName evidence="1">tRNA (adenine(37)-C(2))-methyltransferase</fullName>
    </alternativeName>
    <alternativeName>
        <fullName evidence="1">tRNA m2A37 methyltransferase</fullName>
    </alternativeName>
</protein>
<evidence type="ECO:0000255" key="1">
    <source>
        <dbReference type="HAMAP-Rule" id="MF_01849"/>
    </source>
</evidence>
<evidence type="ECO:0000255" key="2">
    <source>
        <dbReference type="PROSITE-ProRule" id="PRU01266"/>
    </source>
</evidence>
<proteinExistence type="inferred from homology"/>
<feature type="chain" id="PRO_1000188584" description="Dual-specificity RNA methyltransferase RlmN">
    <location>
        <begin position="1"/>
        <end position="399"/>
    </location>
</feature>
<feature type="domain" description="Radical SAM core" evidence="2">
    <location>
        <begin position="127"/>
        <end position="376"/>
    </location>
</feature>
<feature type="active site" description="Proton acceptor" evidence="1">
    <location>
        <position position="121"/>
    </location>
</feature>
<feature type="active site" description="S-methylcysteine intermediate" evidence="1">
    <location>
        <position position="379"/>
    </location>
</feature>
<feature type="binding site" evidence="1">
    <location>
        <position position="141"/>
    </location>
    <ligand>
        <name>[4Fe-4S] cluster</name>
        <dbReference type="ChEBI" id="CHEBI:49883"/>
        <note>4Fe-4S-S-AdoMet</note>
    </ligand>
</feature>
<feature type="binding site" evidence="1">
    <location>
        <position position="145"/>
    </location>
    <ligand>
        <name>[4Fe-4S] cluster</name>
        <dbReference type="ChEBI" id="CHEBI:49883"/>
        <note>4Fe-4S-S-AdoMet</note>
    </ligand>
</feature>
<feature type="binding site" evidence="1">
    <location>
        <position position="148"/>
    </location>
    <ligand>
        <name>[4Fe-4S] cluster</name>
        <dbReference type="ChEBI" id="CHEBI:49883"/>
        <note>4Fe-4S-S-AdoMet</note>
    </ligand>
</feature>
<feature type="binding site" evidence="1">
    <location>
        <begin position="205"/>
        <end position="206"/>
    </location>
    <ligand>
        <name>S-adenosyl-L-methionine</name>
        <dbReference type="ChEBI" id="CHEBI:59789"/>
    </ligand>
</feature>
<feature type="binding site" evidence="1">
    <location>
        <position position="237"/>
    </location>
    <ligand>
        <name>S-adenosyl-L-methionine</name>
        <dbReference type="ChEBI" id="CHEBI:59789"/>
    </ligand>
</feature>
<feature type="binding site" evidence="1">
    <location>
        <begin position="259"/>
        <end position="261"/>
    </location>
    <ligand>
        <name>S-adenosyl-L-methionine</name>
        <dbReference type="ChEBI" id="CHEBI:59789"/>
    </ligand>
</feature>
<feature type="binding site" evidence="1">
    <location>
        <position position="336"/>
    </location>
    <ligand>
        <name>S-adenosyl-L-methionine</name>
        <dbReference type="ChEBI" id="CHEBI:59789"/>
    </ligand>
</feature>
<feature type="disulfide bond" description="(transient)" evidence="1">
    <location>
        <begin position="134"/>
        <end position="379"/>
    </location>
</feature>
<name>RLMN_METSB</name>
<reference key="1">
    <citation type="journal article" date="2010" name="J. Bacteriol.">
        <title>Complete genome sequence of the aerobic facultative methanotroph Methylocella silvestris BL2.</title>
        <authorList>
            <person name="Chen Y."/>
            <person name="Crombie A."/>
            <person name="Rahman M.T."/>
            <person name="Dedysh S.N."/>
            <person name="Liesack W."/>
            <person name="Stott M.B."/>
            <person name="Alam M."/>
            <person name="Theisen A.R."/>
            <person name="Murrell J.C."/>
            <person name="Dunfield P.F."/>
        </authorList>
    </citation>
    <scope>NUCLEOTIDE SEQUENCE [LARGE SCALE GENOMIC DNA]</scope>
    <source>
        <strain>DSM 15510 / CIP 108128 / LMG 27833 / NCIMB 13906 / BL2</strain>
    </source>
</reference>
<keyword id="KW-0004">4Fe-4S</keyword>
<keyword id="KW-0963">Cytoplasm</keyword>
<keyword id="KW-1015">Disulfide bond</keyword>
<keyword id="KW-0408">Iron</keyword>
<keyword id="KW-0411">Iron-sulfur</keyword>
<keyword id="KW-0479">Metal-binding</keyword>
<keyword id="KW-0489">Methyltransferase</keyword>
<keyword id="KW-1185">Reference proteome</keyword>
<keyword id="KW-0698">rRNA processing</keyword>
<keyword id="KW-0949">S-adenosyl-L-methionine</keyword>
<keyword id="KW-0808">Transferase</keyword>
<keyword id="KW-0819">tRNA processing</keyword>
<sequence>MTSSTLLETPAAAADHDCASAPRSLAGLTRDGLAAALLEIGAPERELRMRTAQLWHWIYHRGAGSFDDMLNVSKVLRTQLAEKFTLARPQIVTEQVSTDGTRKWLIRFAPSAESDRLAEVECVYIPDVDRGTLCVSSQVGCTLTCSFCHTGTQKFVRNLTAQEIIAQLIIARDRIGDFPGLAPRDGKGSNSGSRLVTNIVFMGMGEPLYNLDNVVDAVSVLSDGDGLSLSRRRITVSTAGVVPKLPELGEKTGAMLAISLHAVRDELRNTLVPLNKKYPIAALLQACRDYPGASNARRITFEYVMLKGINDSPSDARELVRLLKGIPAKINLIPFNPWPGTAYECSDDAVIEKFSDIVFNAGYASPVRTPRGRDILAACGQLKSETEKLRARALLVAGD</sequence>